<keyword id="KW-0456">Lyase</keyword>
<keyword id="KW-0663">Pyridoxal phosphate</keyword>
<keyword id="KW-0704">Schiff base</keyword>
<dbReference type="EC" id="4.3.3.6" evidence="1"/>
<dbReference type="EMBL" id="CP000702">
    <property type="protein sequence ID" value="ABQ46471.1"/>
    <property type="molecule type" value="Genomic_DNA"/>
</dbReference>
<dbReference type="RefSeq" id="WP_011943089.1">
    <property type="nucleotide sequence ID" value="NC_009486.1"/>
</dbReference>
<dbReference type="SMR" id="A5IJU8"/>
<dbReference type="STRING" id="390874.Tpet_0447"/>
<dbReference type="KEGG" id="tpt:Tpet_0447"/>
<dbReference type="eggNOG" id="COG0214">
    <property type="taxonomic scope" value="Bacteria"/>
</dbReference>
<dbReference type="HOGENOM" id="CLU_055352_1_0_0"/>
<dbReference type="UniPathway" id="UPA00245"/>
<dbReference type="Proteomes" id="UP000006558">
    <property type="component" value="Chromosome"/>
</dbReference>
<dbReference type="GO" id="GO:0036381">
    <property type="term" value="F:pyridoxal 5'-phosphate synthase (glutamine hydrolysing) activity"/>
    <property type="evidence" value="ECO:0007669"/>
    <property type="project" value="UniProtKB-UniRule"/>
</dbReference>
<dbReference type="GO" id="GO:0006520">
    <property type="term" value="P:amino acid metabolic process"/>
    <property type="evidence" value="ECO:0007669"/>
    <property type="project" value="TreeGrafter"/>
</dbReference>
<dbReference type="GO" id="GO:0042823">
    <property type="term" value="P:pyridoxal phosphate biosynthetic process"/>
    <property type="evidence" value="ECO:0007669"/>
    <property type="project" value="UniProtKB-UniRule"/>
</dbReference>
<dbReference type="GO" id="GO:0008615">
    <property type="term" value="P:pyridoxine biosynthetic process"/>
    <property type="evidence" value="ECO:0007669"/>
    <property type="project" value="TreeGrafter"/>
</dbReference>
<dbReference type="CDD" id="cd04727">
    <property type="entry name" value="pdxS"/>
    <property type="match status" value="1"/>
</dbReference>
<dbReference type="FunFam" id="3.20.20.70:FF:000001">
    <property type="entry name" value="Pyridoxine biosynthesis protein PDX1"/>
    <property type="match status" value="1"/>
</dbReference>
<dbReference type="Gene3D" id="3.20.20.70">
    <property type="entry name" value="Aldolase class I"/>
    <property type="match status" value="1"/>
</dbReference>
<dbReference type="HAMAP" id="MF_01824">
    <property type="entry name" value="PdxS"/>
    <property type="match status" value="1"/>
</dbReference>
<dbReference type="InterPro" id="IPR013785">
    <property type="entry name" value="Aldolase_TIM"/>
</dbReference>
<dbReference type="InterPro" id="IPR001852">
    <property type="entry name" value="PdxS/SNZ"/>
</dbReference>
<dbReference type="InterPro" id="IPR033755">
    <property type="entry name" value="PdxS/SNZ_N"/>
</dbReference>
<dbReference type="InterPro" id="IPR011060">
    <property type="entry name" value="RibuloseP-bd_barrel"/>
</dbReference>
<dbReference type="NCBIfam" id="NF003215">
    <property type="entry name" value="PRK04180.1"/>
    <property type="match status" value="1"/>
</dbReference>
<dbReference type="NCBIfam" id="TIGR00343">
    <property type="entry name" value="pyridoxal 5'-phosphate synthase lyase subunit PdxS"/>
    <property type="match status" value="1"/>
</dbReference>
<dbReference type="PANTHER" id="PTHR31829">
    <property type="entry name" value="PYRIDOXAL 5'-PHOSPHATE SYNTHASE SUBUNIT SNZ1-RELATED"/>
    <property type="match status" value="1"/>
</dbReference>
<dbReference type="PANTHER" id="PTHR31829:SF0">
    <property type="entry name" value="PYRIDOXAL 5'-PHOSPHATE SYNTHASE SUBUNIT SNZ1-RELATED"/>
    <property type="match status" value="1"/>
</dbReference>
<dbReference type="Pfam" id="PF01680">
    <property type="entry name" value="SOR_SNZ"/>
    <property type="match status" value="1"/>
</dbReference>
<dbReference type="PIRSF" id="PIRSF029271">
    <property type="entry name" value="Pdx1"/>
    <property type="match status" value="1"/>
</dbReference>
<dbReference type="SUPFAM" id="SSF51366">
    <property type="entry name" value="Ribulose-phoshate binding barrel"/>
    <property type="match status" value="1"/>
</dbReference>
<dbReference type="PROSITE" id="PS01235">
    <property type="entry name" value="PDXS_SNZ_1"/>
    <property type="match status" value="1"/>
</dbReference>
<dbReference type="PROSITE" id="PS51129">
    <property type="entry name" value="PDXS_SNZ_2"/>
    <property type="match status" value="1"/>
</dbReference>
<organism>
    <name type="scientific">Thermotoga petrophila (strain ATCC BAA-488 / DSM 13995 / JCM 10881 / RKU-1)</name>
    <dbReference type="NCBI Taxonomy" id="390874"/>
    <lineage>
        <taxon>Bacteria</taxon>
        <taxon>Thermotogati</taxon>
        <taxon>Thermotogota</taxon>
        <taxon>Thermotogae</taxon>
        <taxon>Thermotogales</taxon>
        <taxon>Thermotogaceae</taxon>
        <taxon>Thermotoga</taxon>
    </lineage>
</organism>
<reference key="1">
    <citation type="submission" date="2007-05" db="EMBL/GenBank/DDBJ databases">
        <title>Complete sequence of Thermotoga petrophila RKU-1.</title>
        <authorList>
            <consortium name="US DOE Joint Genome Institute"/>
            <person name="Copeland A."/>
            <person name="Lucas S."/>
            <person name="Lapidus A."/>
            <person name="Barry K."/>
            <person name="Glavina del Rio T."/>
            <person name="Dalin E."/>
            <person name="Tice H."/>
            <person name="Pitluck S."/>
            <person name="Sims D."/>
            <person name="Brettin T."/>
            <person name="Bruce D."/>
            <person name="Detter J.C."/>
            <person name="Han C."/>
            <person name="Tapia R."/>
            <person name="Schmutz J."/>
            <person name="Larimer F."/>
            <person name="Land M."/>
            <person name="Hauser L."/>
            <person name="Kyrpides N."/>
            <person name="Mikhailova N."/>
            <person name="Nelson K."/>
            <person name="Gogarten J.P."/>
            <person name="Noll K."/>
            <person name="Richardson P."/>
        </authorList>
    </citation>
    <scope>NUCLEOTIDE SEQUENCE [LARGE SCALE GENOMIC DNA]</scope>
    <source>
        <strain>ATCC BAA-488 / DSM 13995 / JCM 10881 / RKU-1</strain>
    </source>
</reference>
<accession>A5IJU8</accession>
<name>PDXS_THEP1</name>
<evidence type="ECO:0000255" key="1">
    <source>
        <dbReference type="HAMAP-Rule" id="MF_01824"/>
    </source>
</evidence>
<feature type="chain" id="PRO_1000070402" description="Pyridoxal 5'-phosphate synthase subunit PdxS">
    <location>
        <begin position="1"/>
        <end position="293"/>
    </location>
</feature>
<feature type="active site" description="Schiff-base intermediate with D-ribose 5-phosphate" evidence="1">
    <location>
        <position position="82"/>
    </location>
</feature>
<feature type="binding site" evidence="1">
    <location>
        <position position="25"/>
    </location>
    <ligand>
        <name>D-ribose 5-phosphate</name>
        <dbReference type="ChEBI" id="CHEBI:78346"/>
    </ligand>
</feature>
<feature type="binding site" evidence="1">
    <location>
        <position position="154"/>
    </location>
    <ligand>
        <name>D-ribose 5-phosphate</name>
        <dbReference type="ChEBI" id="CHEBI:78346"/>
    </ligand>
</feature>
<feature type="binding site" evidence="1">
    <location>
        <position position="166"/>
    </location>
    <ligand>
        <name>D-glyceraldehyde 3-phosphate</name>
        <dbReference type="ChEBI" id="CHEBI:59776"/>
    </ligand>
</feature>
<feature type="binding site" evidence="1">
    <location>
        <position position="215"/>
    </location>
    <ligand>
        <name>D-ribose 5-phosphate</name>
        <dbReference type="ChEBI" id="CHEBI:78346"/>
    </ligand>
</feature>
<feature type="binding site" evidence="1">
    <location>
        <begin position="236"/>
        <end position="237"/>
    </location>
    <ligand>
        <name>D-ribose 5-phosphate</name>
        <dbReference type="ChEBI" id="CHEBI:78346"/>
    </ligand>
</feature>
<comment type="function">
    <text evidence="1">Catalyzes the formation of pyridoxal 5'-phosphate from ribose 5-phosphate (RBP), glyceraldehyde 3-phosphate (G3P) and ammonia. The ammonia is provided by the PdxT subunit. Can also use ribulose 5-phosphate and dihydroxyacetone phosphate as substrates, resulting from enzyme-catalyzed isomerization of RBP and G3P, respectively.</text>
</comment>
<comment type="catalytic activity">
    <reaction evidence="1">
        <text>aldehydo-D-ribose 5-phosphate + D-glyceraldehyde 3-phosphate + L-glutamine = pyridoxal 5'-phosphate + L-glutamate + phosphate + 3 H2O + H(+)</text>
        <dbReference type="Rhea" id="RHEA:31507"/>
        <dbReference type="ChEBI" id="CHEBI:15377"/>
        <dbReference type="ChEBI" id="CHEBI:15378"/>
        <dbReference type="ChEBI" id="CHEBI:29985"/>
        <dbReference type="ChEBI" id="CHEBI:43474"/>
        <dbReference type="ChEBI" id="CHEBI:58273"/>
        <dbReference type="ChEBI" id="CHEBI:58359"/>
        <dbReference type="ChEBI" id="CHEBI:59776"/>
        <dbReference type="ChEBI" id="CHEBI:597326"/>
        <dbReference type="EC" id="4.3.3.6"/>
    </reaction>
</comment>
<comment type="pathway">
    <text evidence="1">Cofactor biosynthesis; pyridoxal 5'-phosphate biosynthesis.</text>
</comment>
<comment type="subunit">
    <text evidence="1">In the presence of PdxT, forms a dodecamer of heterodimers.</text>
</comment>
<comment type="similarity">
    <text evidence="1">Belongs to the PdxS/SNZ family.</text>
</comment>
<sequence length="293" mass="32159">MEIKKGTWIIKKGFAEMFKGGVIMDVTSAEQAKIAEEAGAVAVMALERVPADIRKEGGVARMASIAKIREIMEAVSIPVMAKVRIGHIAEAKILEELGVDFIDESEVLTPADDRFHINKHEFKVPFVCGARDLGEALRRIAEGAAMIRTKGEAGTGNVVEAVKHMRRMMEQIKQVTKMEDEELVAYGKEIGAPVELLREVKRLGRLPVVNFAAGGVATPADAALMMMLGADGVFVGSGIFKSKDPRKMAKAMVLAVTYWDNPRILLKISEDIGEPMRGLDVEELEVRMQERGW</sequence>
<protein>
    <recommendedName>
        <fullName evidence="1">Pyridoxal 5'-phosphate synthase subunit PdxS</fullName>
        <shortName evidence="1">PLP synthase subunit PdxS</shortName>
        <ecNumber evidence="1">4.3.3.6</ecNumber>
    </recommendedName>
    <alternativeName>
        <fullName evidence="1">Pdx1</fullName>
    </alternativeName>
</protein>
<proteinExistence type="inferred from homology"/>
<gene>
    <name evidence="1" type="primary">pdxS</name>
    <name type="ordered locus">Tpet_0447</name>
</gene>